<reference key="1">
    <citation type="submission" date="2006-12" db="EMBL/GenBank/DDBJ databases">
        <authorList>
            <consortium name="NIH - Xenopus Gene Collection (XGC) project"/>
        </authorList>
    </citation>
    <scope>NUCLEOTIDE SEQUENCE [LARGE SCALE MRNA]</scope>
    <source>
        <tissue>Intestine</tissue>
    </source>
</reference>
<dbReference type="EMBL" id="BC129589">
    <property type="protein sequence ID" value="AAI29590.1"/>
    <property type="molecule type" value="mRNA"/>
</dbReference>
<dbReference type="RefSeq" id="NP_001091134.1">
    <property type="nucleotide sequence ID" value="NM_001097665.1"/>
</dbReference>
<dbReference type="SMR" id="A1L2L5"/>
<dbReference type="DNASU" id="100036884"/>
<dbReference type="GeneID" id="100036884"/>
<dbReference type="KEGG" id="xla:100036884"/>
<dbReference type="AGR" id="Xenbase:XB-GENE-985817"/>
<dbReference type="CTD" id="100036884"/>
<dbReference type="Xenbase" id="XB-GENE-985817">
    <property type="gene designation" value="ptcd2.L"/>
</dbReference>
<dbReference type="OrthoDB" id="6073372at2759"/>
<dbReference type="Proteomes" id="UP000186698">
    <property type="component" value="Chromosome 1L"/>
</dbReference>
<dbReference type="Bgee" id="100036884">
    <property type="expression patterns" value="Expressed in muscle tissue and 19 other cell types or tissues"/>
</dbReference>
<dbReference type="GO" id="GO:0005739">
    <property type="term" value="C:mitochondrion"/>
    <property type="evidence" value="ECO:0000250"/>
    <property type="project" value="UniProtKB"/>
</dbReference>
<dbReference type="GO" id="GO:0003723">
    <property type="term" value="F:RNA binding"/>
    <property type="evidence" value="ECO:0007669"/>
    <property type="project" value="TreeGrafter"/>
</dbReference>
<dbReference type="GO" id="GO:0007005">
    <property type="term" value="P:mitochondrion organization"/>
    <property type="evidence" value="ECO:0000318"/>
    <property type="project" value="GO_Central"/>
</dbReference>
<dbReference type="GO" id="GO:0006397">
    <property type="term" value="P:mRNA processing"/>
    <property type="evidence" value="ECO:0007669"/>
    <property type="project" value="UniProtKB-KW"/>
</dbReference>
<dbReference type="GO" id="GO:0050684">
    <property type="term" value="P:regulation of mRNA processing"/>
    <property type="evidence" value="ECO:0000250"/>
    <property type="project" value="UniProtKB"/>
</dbReference>
<dbReference type="FunFam" id="1.25.40.10:FF:001595">
    <property type="entry name" value="Pentatricopeptide repeat-containing protein 2, mitochondrial"/>
    <property type="match status" value="1"/>
</dbReference>
<dbReference type="Gene3D" id="1.25.40.10">
    <property type="entry name" value="Tetratricopeptide repeat domain"/>
    <property type="match status" value="1"/>
</dbReference>
<dbReference type="InterPro" id="IPR034913">
    <property type="entry name" value="mS27/PTCD2"/>
</dbReference>
<dbReference type="InterPro" id="IPR002885">
    <property type="entry name" value="Pentatricopeptide_rpt"/>
</dbReference>
<dbReference type="InterPro" id="IPR034629">
    <property type="entry name" value="PTCD2"/>
</dbReference>
<dbReference type="InterPro" id="IPR011990">
    <property type="entry name" value="TPR-like_helical_dom_sf"/>
</dbReference>
<dbReference type="NCBIfam" id="TIGR00756">
    <property type="entry name" value="PPR"/>
    <property type="match status" value="1"/>
</dbReference>
<dbReference type="PANTHER" id="PTHR14700">
    <property type="entry name" value="PENTATRICOPEPTIDE REPEAT-CONTAINING PROTEIN 2, MITOCHONDRIAL"/>
    <property type="match status" value="1"/>
</dbReference>
<dbReference type="PANTHER" id="PTHR14700:SF0">
    <property type="entry name" value="PENTATRICOPEPTIDE REPEAT-CONTAINING PROTEIN 2, MITOCHONDRIAL"/>
    <property type="match status" value="1"/>
</dbReference>
<dbReference type="Pfam" id="PF10037">
    <property type="entry name" value="MRP-S27"/>
    <property type="match status" value="1"/>
</dbReference>
<dbReference type="PROSITE" id="PS51375">
    <property type="entry name" value="PPR"/>
    <property type="match status" value="1"/>
</dbReference>
<evidence type="ECO:0000250" key="1"/>
<evidence type="ECO:0000305" key="2"/>
<keyword id="KW-0496">Mitochondrion</keyword>
<keyword id="KW-0507">mRNA processing</keyword>
<keyword id="KW-1185">Reference proteome</keyword>
<organism>
    <name type="scientific">Xenopus laevis</name>
    <name type="common">African clawed frog</name>
    <dbReference type="NCBI Taxonomy" id="8355"/>
    <lineage>
        <taxon>Eukaryota</taxon>
        <taxon>Metazoa</taxon>
        <taxon>Chordata</taxon>
        <taxon>Craniata</taxon>
        <taxon>Vertebrata</taxon>
        <taxon>Euteleostomi</taxon>
        <taxon>Amphibia</taxon>
        <taxon>Batrachia</taxon>
        <taxon>Anura</taxon>
        <taxon>Pipoidea</taxon>
        <taxon>Pipidae</taxon>
        <taxon>Xenopodinae</taxon>
        <taxon>Xenopus</taxon>
        <taxon>Xenopus</taxon>
    </lineage>
</organism>
<comment type="function">
    <text evidence="1">May be involved in mitochondrial RNA maturation and mitochondrial respiratory chain function.</text>
</comment>
<comment type="subcellular location">
    <subcellularLocation>
        <location evidence="1">Mitochondrion</location>
    </subcellularLocation>
</comment>
<comment type="similarity">
    <text evidence="2">Belongs to the PTCD2 family.</text>
</comment>
<protein>
    <recommendedName>
        <fullName>Pentatricopeptide repeat-containing protein 2, mitochondrial</fullName>
    </recommendedName>
</protein>
<sequence>MAVLGSWTAQRCLWENGGRSLLRAVAQSGPCCSHQAKRYLLTDDILKLHEFQKKKLATLYQIYGKKDLYFQMIEDKLQRNGIILRDELKTLLHLCSTQPDVEFAKRVIYRYHAENKNVMFGEFRFGPVFLRLCYELDLEDIALDLLKDQTLRGFFSDCTSFNILMDMLFTKGQYERAVEVLVEMRNQRVRFSKDTYILAFAVCYKLNNPNSCKICTTLLEEIEMTGDLLPKQAACFAAAFALKQNEFQRARTIYSKIMNTDTKLCNNLLLLIKVHTSTMEDVLHFLEAATGTTGSILVKKLEFSEEVLASAGQKLKSQAELHTRFNSVYQRLKNEGQISALTLDQMLCYTSPELRHTNAHLLRNRKISHRTFRSLQSTLLVE</sequence>
<gene>
    <name type="primary">ptcd2</name>
</gene>
<feature type="chain" id="PRO_0000344054" description="Pentatricopeptide repeat-containing protein 2, mitochondrial">
    <location>
        <begin position="1"/>
        <end position="382"/>
    </location>
</feature>
<feature type="repeat" description="PPR">
    <location>
        <begin position="159"/>
        <end position="193"/>
    </location>
</feature>
<accession>A1L2L5</accession>
<proteinExistence type="evidence at transcript level"/>
<name>PTCD2_XENLA</name>